<name>CEMA_VITVI</name>
<gene>
    <name evidence="1" type="primary">cemA</name>
</gene>
<accession>Q0ZJ08</accession>
<geneLocation type="chloroplast"/>
<reference key="1">
    <citation type="journal article" date="2006" name="BMC Evol. Biol.">
        <title>Phylogenetic analyses of Vitis (Vitaceae) based on complete chloroplast genome sequences: effects of taxon sampling and phylogenetic methods on resolving relationships among rosids.</title>
        <authorList>
            <person name="Jansen R.K."/>
            <person name="Kaittanis C."/>
            <person name="Lee S.-B."/>
            <person name="Saski C."/>
            <person name="Tomkins J."/>
            <person name="Alverson A.J."/>
            <person name="Daniell H."/>
        </authorList>
    </citation>
    <scope>NUCLEOTIDE SEQUENCE [LARGE SCALE GENOMIC DNA]</scope>
    <source>
        <strain>cv. Maxxa</strain>
    </source>
</reference>
<keyword id="KW-0050">Antiport</keyword>
<keyword id="KW-0150">Chloroplast</keyword>
<keyword id="KW-0375">Hydrogen ion transport</keyword>
<keyword id="KW-0406">Ion transport</keyword>
<keyword id="KW-0472">Membrane</keyword>
<keyword id="KW-0934">Plastid</keyword>
<keyword id="KW-1001">Plastid inner membrane</keyword>
<keyword id="KW-0630">Potassium</keyword>
<keyword id="KW-0633">Potassium transport</keyword>
<keyword id="KW-1185">Reference proteome</keyword>
<keyword id="KW-0812">Transmembrane</keyword>
<keyword id="KW-1133">Transmembrane helix</keyword>
<keyword id="KW-0813">Transport</keyword>
<organism>
    <name type="scientific">Vitis vinifera</name>
    <name type="common">Grape</name>
    <dbReference type="NCBI Taxonomy" id="29760"/>
    <lineage>
        <taxon>Eukaryota</taxon>
        <taxon>Viridiplantae</taxon>
        <taxon>Streptophyta</taxon>
        <taxon>Embryophyta</taxon>
        <taxon>Tracheophyta</taxon>
        <taxon>Spermatophyta</taxon>
        <taxon>Magnoliopsida</taxon>
        <taxon>eudicotyledons</taxon>
        <taxon>Gunneridae</taxon>
        <taxon>Pentapetalae</taxon>
        <taxon>rosids</taxon>
        <taxon>Vitales</taxon>
        <taxon>Vitaceae</taxon>
        <taxon>Viteae</taxon>
        <taxon>Vitis</taxon>
    </lineage>
</organism>
<dbReference type="EMBL" id="DQ424856">
    <property type="protein sequence ID" value="ABE47546.1"/>
    <property type="molecule type" value="Genomic_DNA"/>
</dbReference>
<dbReference type="RefSeq" id="YP_567088.1">
    <property type="nucleotide sequence ID" value="NC_007957.1"/>
</dbReference>
<dbReference type="FunCoup" id="Q0ZJ08">
    <property type="interactions" value="48"/>
</dbReference>
<dbReference type="STRING" id="29760.Q0ZJ08"/>
<dbReference type="PaxDb" id="29760-VIT_08s0056g00590.t01"/>
<dbReference type="EnsemblPlants" id="Vitvi00g04188_t001">
    <property type="protein sequence ID" value="Vitvi00g04188_P001"/>
    <property type="gene ID" value="Vitvi00g04188"/>
</dbReference>
<dbReference type="GeneID" id="4025049"/>
<dbReference type="Gramene" id="Vitvi00g04188_t001">
    <property type="protein sequence ID" value="Vitvi00g04188_P001"/>
    <property type="gene ID" value="Vitvi00g04188"/>
</dbReference>
<dbReference type="KEGG" id="vvi:4025049"/>
<dbReference type="eggNOG" id="ENOG502QV51">
    <property type="taxonomic scope" value="Eukaryota"/>
</dbReference>
<dbReference type="InParanoid" id="Q0ZJ08"/>
<dbReference type="OrthoDB" id="993at2759"/>
<dbReference type="Proteomes" id="UP000009183">
    <property type="component" value="Chloroplast"/>
</dbReference>
<dbReference type="ExpressionAtlas" id="Q0ZJ08">
    <property type="expression patterns" value="baseline and differential"/>
</dbReference>
<dbReference type="GO" id="GO:0009706">
    <property type="term" value="C:chloroplast inner membrane"/>
    <property type="evidence" value="ECO:0007669"/>
    <property type="project" value="UniProtKB-SubCell"/>
</dbReference>
<dbReference type="GO" id="GO:0015297">
    <property type="term" value="F:antiporter activity"/>
    <property type="evidence" value="ECO:0007669"/>
    <property type="project" value="UniProtKB-KW"/>
</dbReference>
<dbReference type="GO" id="GO:0015078">
    <property type="term" value="F:proton transmembrane transporter activity"/>
    <property type="evidence" value="ECO:0007669"/>
    <property type="project" value="UniProtKB-UniRule"/>
</dbReference>
<dbReference type="GO" id="GO:0006813">
    <property type="term" value="P:potassium ion transport"/>
    <property type="evidence" value="ECO:0007669"/>
    <property type="project" value="UniProtKB-UniRule"/>
</dbReference>
<dbReference type="HAMAP" id="MF_01308">
    <property type="entry name" value="CemA_PxcA"/>
    <property type="match status" value="1"/>
</dbReference>
<dbReference type="InterPro" id="IPR004282">
    <property type="entry name" value="CemA"/>
</dbReference>
<dbReference type="PANTHER" id="PTHR33650:SF2">
    <property type="entry name" value="CHLOROPLAST ENVELOPE MEMBRANE PROTEIN"/>
    <property type="match status" value="1"/>
</dbReference>
<dbReference type="PANTHER" id="PTHR33650">
    <property type="entry name" value="CHLOROPLAST ENVELOPE MEMBRANE PROTEIN-RELATED"/>
    <property type="match status" value="1"/>
</dbReference>
<dbReference type="Pfam" id="PF03040">
    <property type="entry name" value="CemA"/>
    <property type="match status" value="1"/>
</dbReference>
<protein>
    <recommendedName>
        <fullName evidence="1">Potassium/proton antiporter CemA</fullName>
    </recommendedName>
    <alternativeName>
        <fullName evidence="1">Chloroplast envelope membrane protein A</fullName>
        <shortName evidence="1">CemA</shortName>
    </alternativeName>
</protein>
<feature type="chain" id="PRO_0000275252" description="Potassium/proton antiporter CemA">
    <location>
        <begin position="1"/>
        <end position="229"/>
    </location>
</feature>
<feature type="transmembrane region" description="Helical" evidence="1">
    <location>
        <begin position="7"/>
        <end position="27"/>
    </location>
</feature>
<feature type="transmembrane region" description="Helical" evidence="1">
    <location>
        <begin position="114"/>
        <end position="134"/>
    </location>
</feature>
<feature type="transmembrane region" description="Helical" evidence="1">
    <location>
        <begin position="154"/>
        <end position="174"/>
    </location>
</feature>
<feature type="transmembrane region" description="Helical" evidence="1">
    <location>
        <begin position="189"/>
        <end position="209"/>
    </location>
</feature>
<proteinExistence type="inferred from homology"/>
<sequence length="229" mass="26868">MTKKKAFTPLLYLASIVFLPWWISLSLNKSLESWVTNWWNTRQSETFLNDIQEKSILEKFIELEELFLLDEMIKECPETHLQKLRMGIHKETIQLIKMYNEDPIHTILHFSTNIICFVILSGYSILGNEELLILNSWIQQFLYNLSDTIKAFSILLLTDLCIGFHSPHGWELMIGSVYKDFGFAHNDQIISGLVSTFPVILDTILKYWIFRYLNRVSPSLVVIYHSMND</sequence>
<evidence type="ECO:0000255" key="1">
    <source>
        <dbReference type="HAMAP-Rule" id="MF_01308"/>
    </source>
</evidence>
<evidence type="ECO:0000305" key="2"/>
<comment type="function">
    <text evidence="1">Contributes to K(+)/H(+) antiport activity by supporting proton efflux to control proton extrusion and homeostasis in chloroplasts in a light-dependent manner to modulate photosynthesis. Prevents excessive induction of non-photochemical quenching (NPQ) under continuous-light conditions. Indirectly promotes efficient inorganic carbon uptake into chloroplasts.</text>
</comment>
<comment type="catalytic activity">
    <reaction evidence="1">
        <text>K(+)(in) + H(+)(out) = K(+)(out) + H(+)(in)</text>
        <dbReference type="Rhea" id="RHEA:29467"/>
        <dbReference type="ChEBI" id="CHEBI:15378"/>
        <dbReference type="ChEBI" id="CHEBI:29103"/>
    </reaction>
</comment>
<comment type="subcellular location">
    <subcellularLocation>
        <location evidence="1">Plastid</location>
        <location evidence="1">Chloroplast inner membrane</location>
        <topology evidence="1">Multi-pass membrane protein</topology>
    </subcellularLocation>
</comment>
<comment type="similarity">
    <text evidence="1 2">Belongs to the CemA family.</text>
</comment>